<protein>
    <recommendedName>
        <fullName>Serine/threonine-protein phosphatase 2A 55 kDa regulatory subunit B alpha isoform</fullName>
    </recommendedName>
    <alternativeName>
        <fullName evidence="5">PP2A subunit B isoform B55-alpha</fullName>
        <shortName evidence="5">B55</shortName>
    </alternativeName>
    <alternativeName>
        <fullName>PP2A subunit B isoform PR55-alpha</fullName>
    </alternativeName>
    <alternativeName>
        <fullName>PP2A subunit B isoform R2-alpha</fullName>
    </alternativeName>
    <alternativeName>
        <fullName>PP2A subunit B isoform alpha</fullName>
    </alternativeName>
</protein>
<dbReference type="EMBL" id="BC065100">
    <property type="protein sequence ID" value="AAH65100.1"/>
    <property type="molecule type" value="mRNA"/>
</dbReference>
<dbReference type="EMBL" id="BC080692">
    <property type="protein sequence ID" value="AAH80692.1"/>
    <property type="molecule type" value="mRNA"/>
</dbReference>
<dbReference type="CCDS" id="CCDS56967.1"/>
<dbReference type="RefSeq" id="NP_001192117.1">
    <property type="nucleotide sequence ID" value="NM_001205188.1"/>
</dbReference>
<dbReference type="RefSeq" id="NP_082308.1">
    <property type="nucleotide sequence ID" value="NM_028032.3"/>
</dbReference>
<dbReference type="SMR" id="Q6P1F6"/>
<dbReference type="BioGRID" id="215068">
    <property type="interactions" value="41"/>
</dbReference>
<dbReference type="CORUM" id="Q6P1F6"/>
<dbReference type="FunCoup" id="Q6P1F6">
    <property type="interactions" value="3499"/>
</dbReference>
<dbReference type="IntAct" id="Q6P1F6">
    <property type="interactions" value="6"/>
</dbReference>
<dbReference type="MINT" id="Q6P1F6"/>
<dbReference type="STRING" id="10090.ENSMUSP00000086640"/>
<dbReference type="GlyGen" id="Q6P1F6">
    <property type="glycosylation" value="1 site, 1 O-linked glycan (1 site)"/>
</dbReference>
<dbReference type="iPTMnet" id="Q6P1F6"/>
<dbReference type="PhosphoSitePlus" id="Q6P1F6"/>
<dbReference type="SwissPalm" id="Q6P1F6"/>
<dbReference type="jPOST" id="Q6P1F6"/>
<dbReference type="PaxDb" id="10090-ENSMUSP00000086640"/>
<dbReference type="ProteomicsDB" id="285988"/>
<dbReference type="Pumba" id="Q6P1F6"/>
<dbReference type="Antibodypedia" id="22918">
    <property type="antibodies" value="218 antibodies from 31 providers"/>
</dbReference>
<dbReference type="Ensembl" id="ENSMUST00000089230.7">
    <property type="protein sequence ID" value="ENSMUSP00000086640.6"/>
    <property type="gene ID" value="ENSMUSG00000022052.10"/>
</dbReference>
<dbReference type="GeneID" id="71978"/>
<dbReference type="KEGG" id="mmu:71978"/>
<dbReference type="UCSC" id="uc007uku.3">
    <property type="organism name" value="mouse"/>
</dbReference>
<dbReference type="AGR" id="MGI:1919228"/>
<dbReference type="CTD" id="5520"/>
<dbReference type="MGI" id="MGI:1919228">
    <property type="gene designation" value="Ppp2r2a"/>
</dbReference>
<dbReference type="VEuPathDB" id="HostDB:ENSMUSG00000022052"/>
<dbReference type="eggNOG" id="KOG1354">
    <property type="taxonomic scope" value="Eukaryota"/>
</dbReference>
<dbReference type="GeneTree" id="ENSGT00950000182864"/>
<dbReference type="HOGENOM" id="CLU_021713_3_3_1"/>
<dbReference type="InParanoid" id="Q6P1F6"/>
<dbReference type="OMA" id="NQIKWCR"/>
<dbReference type="OrthoDB" id="6274823at2759"/>
<dbReference type="PhylomeDB" id="Q6P1F6"/>
<dbReference type="TreeFam" id="TF105553"/>
<dbReference type="Reactome" id="R-MMU-2995383">
    <property type="pathway name" value="Initiation of Nuclear Envelope (NE) Reformation"/>
</dbReference>
<dbReference type="Reactome" id="R-MMU-69231">
    <property type="pathway name" value="Cyclin D associated events in G1"/>
</dbReference>
<dbReference type="Reactome" id="R-MMU-69273">
    <property type="pathway name" value="Cyclin A/B1/B2 associated events during G2/M transition"/>
</dbReference>
<dbReference type="Reactome" id="R-MMU-975957">
    <property type="pathway name" value="Nonsense Mediated Decay (NMD) enhanced by the Exon Junction Complex (EJC)"/>
</dbReference>
<dbReference type="Reactome" id="R-MMU-9860927">
    <property type="pathway name" value="Turbulent (oscillatory, disturbed) flow shear stress activates signaling by PIEZO1 and integrins in endothelial cells"/>
</dbReference>
<dbReference type="BioGRID-ORCS" id="71978">
    <property type="hits" value="15 hits in 77 CRISPR screens"/>
</dbReference>
<dbReference type="ChiTaRS" id="Ppp2r2a">
    <property type="organism name" value="mouse"/>
</dbReference>
<dbReference type="PRO" id="PR:Q6P1F6"/>
<dbReference type="Proteomes" id="UP000000589">
    <property type="component" value="Chromosome 14"/>
</dbReference>
<dbReference type="RNAct" id="Q6P1F6">
    <property type="molecule type" value="protein"/>
</dbReference>
<dbReference type="Bgee" id="ENSMUSG00000022052">
    <property type="expression patterns" value="Expressed in embryonic post-anal tail and 252 other cell types or tissues"/>
</dbReference>
<dbReference type="ExpressionAtlas" id="Q6P1F6">
    <property type="expression patterns" value="baseline and differential"/>
</dbReference>
<dbReference type="GO" id="GO:0098978">
    <property type="term" value="C:glutamatergic synapse"/>
    <property type="evidence" value="ECO:0000314"/>
    <property type="project" value="SynGO"/>
</dbReference>
<dbReference type="GO" id="GO:0000159">
    <property type="term" value="C:protein phosphatase type 2A complex"/>
    <property type="evidence" value="ECO:0000314"/>
    <property type="project" value="UniProtKB"/>
</dbReference>
<dbReference type="GO" id="GO:0045202">
    <property type="term" value="C:synapse"/>
    <property type="evidence" value="ECO:0000314"/>
    <property type="project" value="SynGO"/>
</dbReference>
<dbReference type="GO" id="GO:0140767">
    <property type="term" value="F:enzyme-substrate adaptor activity"/>
    <property type="evidence" value="ECO:0000314"/>
    <property type="project" value="UniProtKB"/>
</dbReference>
<dbReference type="GO" id="GO:0051721">
    <property type="term" value="F:protein phosphatase 2A binding"/>
    <property type="evidence" value="ECO:0007669"/>
    <property type="project" value="Ensembl"/>
</dbReference>
<dbReference type="GO" id="GO:0019888">
    <property type="term" value="F:protein phosphatase regulator activity"/>
    <property type="evidence" value="ECO:0000314"/>
    <property type="project" value="UniProtKB"/>
</dbReference>
<dbReference type="GO" id="GO:0044877">
    <property type="term" value="F:protein-containing complex binding"/>
    <property type="evidence" value="ECO:0007669"/>
    <property type="project" value="Ensembl"/>
</dbReference>
<dbReference type="GO" id="GO:0048156">
    <property type="term" value="F:tau protein binding"/>
    <property type="evidence" value="ECO:0007669"/>
    <property type="project" value="Ensembl"/>
</dbReference>
<dbReference type="GO" id="GO:0006470">
    <property type="term" value="P:protein dephosphorylation"/>
    <property type="evidence" value="ECO:0000250"/>
    <property type="project" value="UniProtKB"/>
</dbReference>
<dbReference type="GO" id="GO:0051983">
    <property type="term" value="P:regulation of chromosome segregation"/>
    <property type="evidence" value="ECO:0000314"/>
    <property type="project" value="UniProtKB"/>
</dbReference>
<dbReference type="GO" id="GO:0043278">
    <property type="term" value="P:response to morphine"/>
    <property type="evidence" value="ECO:0000315"/>
    <property type="project" value="MGI"/>
</dbReference>
<dbReference type="FunFam" id="2.130.10.10:FF:000002">
    <property type="entry name" value="Serine/threonine-protein phosphatase 2A 55 kDa regulatory subunit B"/>
    <property type="match status" value="1"/>
</dbReference>
<dbReference type="Gene3D" id="2.130.10.10">
    <property type="entry name" value="YVTN repeat-like/Quinoprotein amine dehydrogenase"/>
    <property type="match status" value="1"/>
</dbReference>
<dbReference type="InterPro" id="IPR000009">
    <property type="entry name" value="PP2A_PR55"/>
</dbReference>
<dbReference type="InterPro" id="IPR018067">
    <property type="entry name" value="PP2A_PR55_CS"/>
</dbReference>
<dbReference type="InterPro" id="IPR015943">
    <property type="entry name" value="WD40/YVTN_repeat-like_dom_sf"/>
</dbReference>
<dbReference type="InterPro" id="IPR036322">
    <property type="entry name" value="WD40_repeat_dom_sf"/>
</dbReference>
<dbReference type="InterPro" id="IPR001680">
    <property type="entry name" value="WD40_rpt"/>
</dbReference>
<dbReference type="PANTHER" id="PTHR11871">
    <property type="entry name" value="PROTEIN PHOSPHATASE PP2A REGULATORY SUBUNIT B"/>
    <property type="match status" value="1"/>
</dbReference>
<dbReference type="PIRSF" id="PIRSF037309">
    <property type="entry name" value="PP2A_PR55"/>
    <property type="match status" value="1"/>
</dbReference>
<dbReference type="PRINTS" id="PR00600">
    <property type="entry name" value="PP2APR55"/>
</dbReference>
<dbReference type="SMART" id="SM00320">
    <property type="entry name" value="WD40"/>
    <property type="match status" value="7"/>
</dbReference>
<dbReference type="SUPFAM" id="SSF50978">
    <property type="entry name" value="WD40 repeat-like"/>
    <property type="match status" value="1"/>
</dbReference>
<dbReference type="PROSITE" id="PS01024">
    <property type="entry name" value="PR55_1"/>
    <property type="match status" value="1"/>
</dbReference>
<dbReference type="PROSITE" id="PS01025">
    <property type="entry name" value="PR55_2"/>
    <property type="match status" value="1"/>
</dbReference>
<feature type="initiator methionine" description="Removed" evidence="1">
    <location>
        <position position="1"/>
    </location>
</feature>
<feature type="chain" id="PRO_0000071417" description="Serine/threonine-protein phosphatase 2A 55 kDa regulatory subunit B alpha isoform">
    <location>
        <begin position="2"/>
        <end position="447"/>
    </location>
</feature>
<feature type="repeat" description="WD 1" evidence="1">
    <location>
        <begin position="11"/>
        <end position="80"/>
    </location>
</feature>
<feature type="repeat" description="WD 2" evidence="1">
    <location>
        <begin position="94"/>
        <end position="174"/>
    </location>
</feature>
<feature type="repeat" description="WD 3" evidence="1">
    <location>
        <begin position="175"/>
        <end position="218"/>
    </location>
</feature>
<feature type="repeat" description="WD 4" evidence="1">
    <location>
        <begin position="227"/>
        <end position="270"/>
    </location>
</feature>
<feature type="repeat" description="WD 5" evidence="1">
    <location>
        <begin position="288"/>
        <end position="325"/>
    </location>
</feature>
<feature type="repeat" description="WD 6" evidence="1">
    <location>
        <begin position="347"/>
        <end position="381"/>
    </location>
</feature>
<feature type="repeat" description="WD 7" evidence="1">
    <location>
        <begin position="414"/>
        <end position="446"/>
    </location>
</feature>
<feature type="modified residue" description="N-acetylalanine" evidence="1">
    <location>
        <position position="2"/>
    </location>
</feature>
<evidence type="ECO:0000250" key="1">
    <source>
        <dbReference type="UniProtKB" id="P63151"/>
    </source>
</evidence>
<evidence type="ECO:0000269" key="2">
    <source>
    </source>
</evidence>
<evidence type="ECO:0000269" key="3">
    <source>
    </source>
</evidence>
<evidence type="ECO:0000269" key="4">
    <source>
    </source>
</evidence>
<evidence type="ECO:0000303" key="5">
    <source>
    </source>
</evidence>
<evidence type="ECO:0000305" key="6"/>
<evidence type="ECO:0000312" key="7">
    <source>
        <dbReference type="MGI" id="MGI:1919228"/>
    </source>
</evidence>
<gene>
    <name evidence="5 7" type="primary">Ppp2r2a</name>
</gene>
<proteinExistence type="evidence at protein level"/>
<organism>
    <name type="scientific">Mus musculus</name>
    <name type="common">Mouse</name>
    <dbReference type="NCBI Taxonomy" id="10090"/>
    <lineage>
        <taxon>Eukaryota</taxon>
        <taxon>Metazoa</taxon>
        <taxon>Chordata</taxon>
        <taxon>Craniata</taxon>
        <taxon>Vertebrata</taxon>
        <taxon>Euteleostomi</taxon>
        <taxon>Mammalia</taxon>
        <taxon>Eutheria</taxon>
        <taxon>Euarchontoglires</taxon>
        <taxon>Glires</taxon>
        <taxon>Rodentia</taxon>
        <taxon>Myomorpha</taxon>
        <taxon>Muroidea</taxon>
        <taxon>Muridae</taxon>
        <taxon>Murinae</taxon>
        <taxon>Mus</taxon>
        <taxon>Mus</taxon>
    </lineage>
</organism>
<keyword id="KW-0007">Acetylation</keyword>
<keyword id="KW-0903">Direct protein sequencing</keyword>
<keyword id="KW-1185">Reference proteome</keyword>
<keyword id="KW-0677">Repeat</keyword>
<keyword id="KW-0853">WD repeat</keyword>
<comment type="function">
    <text evidence="1 4">Substrate-recognition subunit of protein phosphatase 2A (PP2A) that plays a key role in cell cycle by controlling mitosis entry and exit (PubMed:39003739). Involved in chromosome clustering during late mitosis by mediating dephosphorylation of MKI67 (PubMed:39003739). Essential for serine/threonine-protein phosphatase 2A-mediated dephosphorylation of WEE1, preventing its ubiquitin-mediated proteolysis, increasing WEE1 protein levels, and promoting the G2/M checkpoint (By similarity).</text>
</comment>
<comment type="subunit">
    <text evidence="1 2">PP2A consists of a common heterodimeric core enzyme, composed of a 36 kDa catalytic subunit (subunit C) and a 65 kDa constant regulatory subunit (PR65 or subunit A), that associates with a variety of regulatory subunits (By similarity). Proteins that associate with the core dimer include three families of regulatory subunits B (the R2/B/PR55/B55, R3/B''/PR72/PR130/PR59 and R5/B'/B56 families), the 48 kDa variable regulatory subunit, viral proteins, and cell signaling molecules (By similarity). Interacts with the PP2A C catalytic subunit PPP2CA (By similarity). Interacts with the PP2A A subunit PPP2R1A (By similarity). Interacts with TP53 (By similarity). Interacts with IER5 (By similarity). Interacts with MFHAS1; the interaction is direct (By similarity). Interacts with PABIR1/FAM122A (via its N-terminus); the interaction is direct and inhibits PP2A activity (By similarity). Interacts with ARPP19; the interaction is direct and inhibits PP2A activity (By similarity). Interacts with CRTC3 (PubMed:30611118).</text>
</comment>
<comment type="domain">
    <text evidence="1">Has an extended WD 2 repeat that is important for the interaction with PPP2R1A.</text>
</comment>
<comment type="disruption phenotype">
    <text evidence="3 4">Lethality during late embryonic development (PubMed:32582689, PubMed:39003739). Embryos are significantly smaller and display a variety of neural defects such as exencephaly, spina bifida and cranial vault collapse, as well as syndactyly and severe epidermal defects; all processes driven by growth and differentiation of the ectoderm (PubMed:32582689). Embryos have incomplete epidermal barrier acquisition, associated with thin, poorly differentiated stratified epithelium with weak attachment to the underlying dermis (PubMed:32582689). Mitotic cells display increased chromosome scattering, associated with in the presence of enhanced phosphorylation and perichromosomal loading of Mki67 (PubMed:39003739).</text>
</comment>
<comment type="similarity">
    <text evidence="6">Belongs to the phosphatase 2A regulatory subunit B family.</text>
</comment>
<reference key="1">
    <citation type="journal article" date="2004" name="Genome Res.">
        <title>The status, quality, and expansion of the NIH full-length cDNA project: the Mammalian Gene Collection (MGC).</title>
        <authorList>
            <consortium name="The MGC Project Team"/>
        </authorList>
    </citation>
    <scope>NUCLEOTIDE SEQUENCE [LARGE SCALE MRNA]</scope>
    <source>
        <strain>C57BL/6J</strain>
        <tissue>Brain</tissue>
        <tissue>Embryo</tissue>
    </source>
</reference>
<reference key="2">
    <citation type="submission" date="2007-03" db="UniProtKB">
        <authorList>
            <person name="Lubec G."/>
            <person name="Klug S."/>
        </authorList>
    </citation>
    <scope>PROTEIN SEQUENCE OF 200-210</scope>
    <scope>IDENTIFICATION BY MASS SPECTROMETRY</scope>
    <source>
        <tissue>Hippocampus</tissue>
    </source>
</reference>
<reference key="3">
    <citation type="journal article" date="2010" name="Cell">
        <title>A tissue-specific atlas of mouse protein phosphorylation and expression.</title>
        <authorList>
            <person name="Huttlin E.L."/>
            <person name="Jedrychowski M.P."/>
            <person name="Elias J.E."/>
            <person name="Goswami T."/>
            <person name="Rad R."/>
            <person name="Beausoleil S.A."/>
            <person name="Villen J."/>
            <person name="Haas W."/>
            <person name="Sowa M.E."/>
            <person name="Gygi S.P."/>
        </authorList>
    </citation>
    <scope>IDENTIFICATION BY MASS SPECTROMETRY [LARGE SCALE ANALYSIS]</scope>
    <source>
        <tissue>Brain</tissue>
        <tissue>Brown adipose tissue</tissue>
        <tissue>Heart</tissue>
        <tissue>Kidney</tissue>
        <tissue>Liver</tissue>
        <tissue>Lung</tissue>
        <tissue>Pancreas</tissue>
        <tissue>Spleen</tissue>
        <tissue>Testis</tissue>
    </source>
</reference>
<reference key="4">
    <citation type="journal article" date="2018" name="IScience">
        <title>Mitogenic Signals Stimulate the CREB Coactivator CRTC3 through PP2A Recruitment.</title>
        <authorList>
            <person name="Sonntag T."/>
            <person name="Ostojic J."/>
            <person name="Vaughan J.M."/>
            <person name="Moresco J.J."/>
            <person name="Yoon Y.S."/>
            <person name="Yates J.R. III"/>
            <person name="Montminy M."/>
        </authorList>
    </citation>
    <scope>INTERACTION WITH CRTC3</scope>
</reference>
<reference key="5">
    <citation type="journal article" date="2020" name="Front. Cell Dev. Biol.">
        <title>Ppp2r2a knockout mice reveal that protein phosphatase 2A regulatory subunit, PP2A-B55alpha, is an essential regulator of neuronal and epidermal embryonic development.</title>
        <authorList>
            <person name="Panicker N."/>
            <person name="Coutman M."/>
            <person name="Lawlor-O'Neill C."/>
            <person name="Kahl R.G.S."/>
            <person name="Roselli S."/>
            <person name="Verrills N.M."/>
        </authorList>
    </citation>
    <scope>DISRUPTION PHENOTYPE</scope>
</reference>
<reference key="6">
    <citation type="journal article" date="2024" name="Cell Rep.">
        <title>PP2A-B55 phosphatase counteracts Ki-67-dependent chromosome individualization during mitosis.</title>
        <authorList>
            <person name="Sanz-Flores M."/>
            <person name="Ruiz-Torres M."/>
            <person name="Aguirre-Portoles C."/>
            <person name="El Bakkali A."/>
            <person name="Salvador-Barbero B."/>
            <person name="Villarroya-Beltri C."/>
            <person name="Ortega S."/>
            <person name="Megias D."/>
            <person name="Gerlich D.W."/>
            <person name="Alvarez-Fernandez M."/>
            <person name="Malumbres M."/>
        </authorList>
    </citation>
    <scope>FUNCTION</scope>
    <scope>DISRUPTION PHENOTYPE</scope>
</reference>
<accession>Q6P1F6</accession>
<name>2ABA_MOUSE</name>
<sequence>MAGAGGGNDIQWCFSQVKGAVDDDVAEADIISTVEFNHSGELLATGDKGGRVVIFQQEQENKIQSHSRGEYNVYSTFQSHEPEFDYLKSLEIEEKINKIRWLPQKNAAQFLLSTNDKTIKLWKISERDKRPEGYNLKEEDGRYRDPTTVTTLRVPVFRPMDLMVEASPRRIFANAHTYHINSISINSDYETYLSADDLRINLWHLEITDRSFNIVDIKPANMEELTEVITAAEFHPNSCNTFVYSSSKGTIRLCDMRASALCDRHSKLFEEPEDPSNRSFFSEIISSISDVKFSHSGRYMMTRDYLSVKIWDLNMENRPVETYQVHEYLRSKLCSLYENDCIFDKFECCWNGSDSVVMTGSYNNFFRMFDRNTKRDITLEASRENNKPRTVLKPRKVCASGKRKKDEISVDSLDFNKKILHTAWHPKENIIAVATTNNLYIFQDKVN</sequence>